<evidence type="ECO:0000255" key="1">
    <source>
        <dbReference type="HAMAP-Rule" id="MF_01279"/>
    </source>
</evidence>
<dbReference type="EC" id="3.4.13.9" evidence="1"/>
<dbReference type="EMBL" id="CP000931">
    <property type="protein sequence ID" value="ABZ74593.1"/>
    <property type="molecule type" value="Genomic_DNA"/>
</dbReference>
<dbReference type="RefSeq" id="WP_012275151.1">
    <property type="nucleotide sequence ID" value="NC_010334.1"/>
</dbReference>
<dbReference type="SMR" id="B0TLC0"/>
<dbReference type="STRING" id="458817.Shal_0017"/>
<dbReference type="MEROPS" id="M24.003"/>
<dbReference type="KEGG" id="shl:Shal_0017"/>
<dbReference type="eggNOG" id="COG0006">
    <property type="taxonomic scope" value="Bacteria"/>
</dbReference>
<dbReference type="HOGENOM" id="CLU_050675_0_0_6"/>
<dbReference type="OrthoDB" id="9806388at2"/>
<dbReference type="Proteomes" id="UP000001317">
    <property type="component" value="Chromosome"/>
</dbReference>
<dbReference type="GO" id="GO:0005829">
    <property type="term" value="C:cytosol"/>
    <property type="evidence" value="ECO:0007669"/>
    <property type="project" value="TreeGrafter"/>
</dbReference>
<dbReference type="GO" id="GO:0004177">
    <property type="term" value="F:aminopeptidase activity"/>
    <property type="evidence" value="ECO:0007669"/>
    <property type="project" value="TreeGrafter"/>
</dbReference>
<dbReference type="GO" id="GO:0046872">
    <property type="term" value="F:metal ion binding"/>
    <property type="evidence" value="ECO:0007669"/>
    <property type="project" value="UniProtKB-KW"/>
</dbReference>
<dbReference type="GO" id="GO:0008235">
    <property type="term" value="F:metalloexopeptidase activity"/>
    <property type="evidence" value="ECO:0007669"/>
    <property type="project" value="UniProtKB-UniRule"/>
</dbReference>
<dbReference type="GO" id="GO:0016795">
    <property type="term" value="F:phosphoric triester hydrolase activity"/>
    <property type="evidence" value="ECO:0007669"/>
    <property type="project" value="InterPro"/>
</dbReference>
<dbReference type="GO" id="GO:0102009">
    <property type="term" value="F:proline dipeptidase activity"/>
    <property type="evidence" value="ECO:0007669"/>
    <property type="project" value="UniProtKB-EC"/>
</dbReference>
<dbReference type="GO" id="GO:0006508">
    <property type="term" value="P:proteolysis"/>
    <property type="evidence" value="ECO:0007669"/>
    <property type="project" value="UniProtKB-KW"/>
</dbReference>
<dbReference type="CDD" id="cd01087">
    <property type="entry name" value="Prolidase"/>
    <property type="match status" value="1"/>
</dbReference>
<dbReference type="Gene3D" id="3.90.230.10">
    <property type="entry name" value="Creatinase/methionine aminopeptidase superfamily"/>
    <property type="match status" value="1"/>
</dbReference>
<dbReference type="Gene3D" id="3.40.350.10">
    <property type="entry name" value="Creatinase/prolidase N-terminal domain"/>
    <property type="match status" value="1"/>
</dbReference>
<dbReference type="HAMAP" id="MF_01279">
    <property type="entry name" value="X_Pro_dipeptid"/>
    <property type="match status" value="1"/>
</dbReference>
<dbReference type="InterPro" id="IPR029149">
    <property type="entry name" value="Creatin/AminoP/Spt16_N"/>
</dbReference>
<dbReference type="InterPro" id="IPR036005">
    <property type="entry name" value="Creatinase/aminopeptidase-like"/>
</dbReference>
<dbReference type="InterPro" id="IPR048819">
    <property type="entry name" value="PepQ_N"/>
</dbReference>
<dbReference type="InterPro" id="IPR000994">
    <property type="entry name" value="Pept_M24"/>
</dbReference>
<dbReference type="InterPro" id="IPR001131">
    <property type="entry name" value="Peptidase_M24B_aminopep-P_CS"/>
</dbReference>
<dbReference type="InterPro" id="IPR052433">
    <property type="entry name" value="X-Pro_dipept-like"/>
</dbReference>
<dbReference type="InterPro" id="IPR022846">
    <property type="entry name" value="X_Pro_dipept"/>
</dbReference>
<dbReference type="NCBIfam" id="NF010133">
    <property type="entry name" value="PRK13607.1"/>
    <property type="match status" value="1"/>
</dbReference>
<dbReference type="PANTHER" id="PTHR43226">
    <property type="entry name" value="XAA-PRO AMINOPEPTIDASE 3"/>
    <property type="match status" value="1"/>
</dbReference>
<dbReference type="PANTHER" id="PTHR43226:SF8">
    <property type="entry name" value="XAA-PRO DIPEPTIDASE"/>
    <property type="match status" value="1"/>
</dbReference>
<dbReference type="Pfam" id="PF21216">
    <property type="entry name" value="PepQ_N"/>
    <property type="match status" value="1"/>
</dbReference>
<dbReference type="Pfam" id="PF00557">
    <property type="entry name" value="Peptidase_M24"/>
    <property type="match status" value="1"/>
</dbReference>
<dbReference type="SUPFAM" id="SSF55920">
    <property type="entry name" value="Creatinase/aminopeptidase"/>
    <property type="match status" value="1"/>
</dbReference>
<dbReference type="PROSITE" id="PS00491">
    <property type="entry name" value="PROLINE_PEPTIDASE"/>
    <property type="match status" value="1"/>
</dbReference>
<name>PEPQ_SHEHH</name>
<accession>B0TLC0</accession>
<organism>
    <name type="scientific">Shewanella halifaxensis (strain HAW-EB4)</name>
    <dbReference type="NCBI Taxonomy" id="458817"/>
    <lineage>
        <taxon>Bacteria</taxon>
        <taxon>Pseudomonadati</taxon>
        <taxon>Pseudomonadota</taxon>
        <taxon>Gammaproteobacteria</taxon>
        <taxon>Alteromonadales</taxon>
        <taxon>Shewanellaceae</taxon>
        <taxon>Shewanella</taxon>
    </lineage>
</organism>
<reference key="1">
    <citation type="submission" date="2008-01" db="EMBL/GenBank/DDBJ databases">
        <title>Complete sequence of Shewanella halifaxensis HAW-EB4.</title>
        <authorList>
            <consortium name="US DOE Joint Genome Institute"/>
            <person name="Copeland A."/>
            <person name="Lucas S."/>
            <person name="Lapidus A."/>
            <person name="Glavina del Rio T."/>
            <person name="Dalin E."/>
            <person name="Tice H."/>
            <person name="Bruce D."/>
            <person name="Goodwin L."/>
            <person name="Pitluck S."/>
            <person name="Sims D."/>
            <person name="Brettin T."/>
            <person name="Detter J.C."/>
            <person name="Han C."/>
            <person name="Kuske C.R."/>
            <person name="Schmutz J."/>
            <person name="Larimer F."/>
            <person name="Land M."/>
            <person name="Hauser L."/>
            <person name="Kyrpides N."/>
            <person name="Kim E."/>
            <person name="Zhao J.-S."/>
            <person name="Richardson P."/>
        </authorList>
    </citation>
    <scope>NUCLEOTIDE SEQUENCE [LARGE SCALE GENOMIC DNA]</scope>
    <source>
        <strain>HAW-EB4</strain>
    </source>
</reference>
<gene>
    <name evidence="1" type="primary">pepQ</name>
    <name type="ordered locus">Shal_0017</name>
</gene>
<protein>
    <recommendedName>
        <fullName evidence="1">Xaa-Pro dipeptidase</fullName>
        <shortName evidence="1">X-Pro dipeptidase</shortName>
        <ecNumber evidence="1">3.4.13.9</ecNumber>
    </recommendedName>
    <alternativeName>
        <fullName evidence="1">Imidodipeptidase</fullName>
    </alternativeName>
    <alternativeName>
        <fullName evidence="1">Proline dipeptidase</fullName>
        <shortName evidence="1">Prolidase</shortName>
    </alternativeName>
</protein>
<feature type="chain" id="PRO_1000085887" description="Xaa-Pro dipeptidase">
    <location>
        <begin position="1"/>
        <end position="440"/>
    </location>
</feature>
<feature type="binding site" evidence="1">
    <location>
        <position position="244"/>
    </location>
    <ligand>
        <name>Mn(2+)</name>
        <dbReference type="ChEBI" id="CHEBI:29035"/>
        <label>2</label>
    </ligand>
</feature>
<feature type="binding site" evidence="1">
    <location>
        <position position="255"/>
    </location>
    <ligand>
        <name>Mn(2+)</name>
        <dbReference type="ChEBI" id="CHEBI:29035"/>
        <label>1</label>
    </ligand>
</feature>
<feature type="binding site" evidence="1">
    <location>
        <position position="255"/>
    </location>
    <ligand>
        <name>Mn(2+)</name>
        <dbReference type="ChEBI" id="CHEBI:29035"/>
        <label>2</label>
    </ligand>
</feature>
<feature type="binding site" evidence="1">
    <location>
        <position position="335"/>
    </location>
    <ligand>
        <name>Mn(2+)</name>
        <dbReference type="ChEBI" id="CHEBI:29035"/>
        <label>1</label>
    </ligand>
</feature>
<feature type="binding site" evidence="1">
    <location>
        <position position="380"/>
    </location>
    <ligand>
        <name>Mn(2+)</name>
        <dbReference type="ChEBI" id="CHEBI:29035"/>
        <label>1</label>
    </ligand>
</feature>
<feature type="binding site" evidence="1">
    <location>
        <position position="419"/>
    </location>
    <ligand>
        <name>Mn(2+)</name>
        <dbReference type="ChEBI" id="CHEBI:29035"/>
        <label>1</label>
    </ligand>
</feature>
<feature type="binding site" evidence="1">
    <location>
        <position position="419"/>
    </location>
    <ligand>
        <name>Mn(2+)</name>
        <dbReference type="ChEBI" id="CHEBI:29035"/>
        <label>2</label>
    </ligand>
</feature>
<comment type="function">
    <text evidence="1">Splits dipeptides with a prolyl residue in the C-terminal position.</text>
</comment>
<comment type="catalytic activity">
    <reaction evidence="1">
        <text>Xaa-L-Pro dipeptide + H2O = an L-alpha-amino acid + L-proline</text>
        <dbReference type="Rhea" id="RHEA:76407"/>
        <dbReference type="ChEBI" id="CHEBI:15377"/>
        <dbReference type="ChEBI" id="CHEBI:59869"/>
        <dbReference type="ChEBI" id="CHEBI:60039"/>
        <dbReference type="ChEBI" id="CHEBI:195196"/>
        <dbReference type="EC" id="3.4.13.9"/>
    </reaction>
</comment>
<comment type="cofactor">
    <cofactor evidence="1">
        <name>Mn(2+)</name>
        <dbReference type="ChEBI" id="CHEBI:29035"/>
    </cofactor>
    <text evidence="1">Binds 2 manganese ions per subunit.</text>
</comment>
<comment type="similarity">
    <text evidence="1">Belongs to the peptidase M24B family. Bacterial-type prolidase subfamily.</text>
</comment>
<proteinExistence type="inferred from homology"/>
<keyword id="KW-0224">Dipeptidase</keyword>
<keyword id="KW-0378">Hydrolase</keyword>
<keyword id="KW-0464">Manganese</keyword>
<keyword id="KW-0479">Metal-binding</keyword>
<keyword id="KW-0482">Metalloprotease</keyword>
<keyword id="KW-0645">Protease</keyword>
<sequence length="440" mass="50129">MEQLARLYHDHLRVLNQRVCEILSRENLSGLVIHSGQPHRQFLDDLDYPFKVNPHFKAWLPVIDNPNSWLVVNGTDKPLLIFYRPVDFWHKVADEPNEFWAEHVDIKFLTKADKVAEYLPADIDEWAYIGEHLDVADVLGFARRNPDSVLSYLNYHRATKTEYELACMRKANEIAVTGHQAAKTAFYNGASEFEILQVYLSAISQGENQVPYSSIVALNENSAILHYTALEHTAPAQRRSFLIDAGANFNGYASDITRSYAFEKNIFDDLITAIDNMQLQIINLMQPGVSYAQLHVETHYKLAQILLDFDIVSGDVQGLVEQGITSVFFPHGLGHMLGIQVHDMGGFLGDDKGAHIAVPEAHPFLRCTRELDVNQVLTIEPGVYIIDSLLNELKQDKRQSQINWNTVEVLRPFGGIRIEDNVIVHRDRIENMTRNWGLNR</sequence>